<sequence length="83" mass="9258">MSKTQINLQDAFLNQLRKENIPVTIFLVNGFQLKGAVRGFDNFTVILESDGKQLMVYKHAISTVSPSRPVNTSATPEHRNVGQ</sequence>
<reference key="1">
    <citation type="submission" date="2007-10" db="EMBL/GenBank/DDBJ databases">
        <title>Complete sequence of chromosome of Desulforudis audaxviator MP104C.</title>
        <authorList>
            <person name="Copeland A."/>
            <person name="Lucas S."/>
            <person name="Lapidus A."/>
            <person name="Barry K."/>
            <person name="Glavina del Rio T."/>
            <person name="Dalin E."/>
            <person name="Tice H."/>
            <person name="Bruce D."/>
            <person name="Pitluck S."/>
            <person name="Lowry S.R."/>
            <person name="Larimer F."/>
            <person name="Land M.L."/>
            <person name="Hauser L."/>
            <person name="Kyrpides N."/>
            <person name="Ivanova N.N."/>
            <person name="Richardson P."/>
        </authorList>
    </citation>
    <scope>NUCLEOTIDE SEQUENCE [LARGE SCALE GENOMIC DNA]</scope>
    <source>
        <strain>MP104C</strain>
    </source>
</reference>
<name>HFQ_DESAP</name>
<keyword id="KW-1185">Reference proteome</keyword>
<keyword id="KW-0694">RNA-binding</keyword>
<keyword id="KW-0346">Stress response</keyword>
<feature type="chain" id="PRO_1000190321" description="RNA-binding protein Hfq">
    <location>
        <begin position="1"/>
        <end position="83"/>
    </location>
</feature>
<feature type="domain" description="Sm" evidence="2">
    <location>
        <begin position="10"/>
        <end position="70"/>
    </location>
</feature>
<organism>
    <name type="scientific">Desulforudis audaxviator (strain MP104C)</name>
    <dbReference type="NCBI Taxonomy" id="477974"/>
    <lineage>
        <taxon>Bacteria</taxon>
        <taxon>Bacillati</taxon>
        <taxon>Bacillota</taxon>
        <taxon>Clostridia</taxon>
        <taxon>Thermoanaerobacterales</taxon>
        <taxon>Candidatus Desulforudaceae</taxon>
        <taxon>Candidatus Desulforudis</taxon>
    </lineage>
</organism>
<protein>
    <recommendedName>
        <fullName evidence="1">RNA-binding protein Hfq</fullName>
    </recommendedName>
</protein>
<accession>B1I296</accession>
<evidence type="ECO:0000255" key="1">
    <source>
        <dbReference type="HAMAP-Rule" id="MF_00436"/>
    </source>
</evidence>
<evidence type="ECO:0000255" key="2">
    <source>
        <dbReference type="PROSITE-ProRule" id="PRU01346"/>
    </source>
</evidence>
<dbReference type="EMBL" id="CP000860">
    <property type="protein sequence ID" value="ACA59098.1"/>
    <property type="molecule type" value="Genomic_DNA"/>
</dbReference>
<dbReference type="RefSeq" id="WP_012301687.1">
    <property type="nucleotide sequence ID" value="NC_010424.1"/>
</dbReference>
<dbReference type="SMR" id="B1I296"/>
<dbReference type="STRING" id="477974.Daud_0557"/>
<dbReference type="KEGG" id="dau:Daud_0557"/>
<dbReference type="eggNOG" id="COG1923">
    <property type="taxonomic scope" value="Bacteria"/>
</dbReference>
<dbReference type="HOGENOM" id="CLU_113688_0_2_9"/>
<dbReference type="OrthoDB" id="9799751at2"/>
<dbReference type="Proteomes" id="UP000008544">
    <property type="component" value="Chromosome"/>
</dbReference>
<dbReference type="GO" id="GO:0005829">
    <property type="term" value="C:cytosol"/>
    <property type="evidence" value="ECO:0007669"/>
    <property type="project" value="TreeGrafter"/>
</dbReference>
<dbReference type="GO" id="GO:0003723">
    <property type="term" value="F:RNA binding"/>
    <property type="evidence" value="ECO:0007669"/>
    <property type="project" value="UniProtKB-UniRule"/>
</dbReference>
<dbReference type="GO" id="GO:0006355">
    <property type="term" value="P:regulation of DNA-templated transcription"/>
    <property type="evidence" value="ECO:0007669"/>
    <property type="project" value="InterPro"/>
</dbReference>
<dbReference type="GO" id="GO:0043487">
    <property type="term" value="P:regulation of RNA stability"/>
    <property type="evidence" value="ECO:0007669"/>
    <property type="project" value="TreeGrafter"/>
</dbReference>
<dbReference type="GO" id="GO:0045974">
    <property type="term" value="P:regulation of translation, ncRNA-mediated"/>
    <property type="evidence" value="ECO:0007669"/>
    <property type="project" value="TreeGrafter"/>
</dbReference>
<dbReference type="CDD" id="cd01716">
    <property type="entry name" value="Hfq"/>
    <property type="match status" value="1"/>
</dbReference>
<dbReference type="FunFam" id="2.30.30.100:FF:000012">
    <property type="entry name" value="RNA-binding protein Hfq"/>
    <property type="match status" value="1"/>
</dbReference>
<dbReference type="Gene3D" id="2.30.30.100">
    <property type="match status" value="1"/>
</dbReference>
<dbReference type="HAMAP" id="MF_00436">
    <property type="entry name" value="Hfq"/>
    <property type="match status" value="1"/>
</dbReference>
<dbReference type="InterPro" id="IPR005001">
    <property type="entry name" value="Hfq"/>
</dbReference>
<dbReference type="InterPro" id="IPR010920">
    <property type="entry name" value="LSM_dom_sf"/>
</dbReference>
<dbReference type="InterPro" id="IPR047575">
    <property type="entry name" value="Sm"/>
</dbReference>
<dbReference type="NCBIfam" id="TIGR02383">
    <property type="entry name" value="Hfq"/>
    <property type="match status" value="1"/>
</dbReference>
<dbReference type="NCBIfam" id="NF001602">
    <property type="entry name" value="PRK00395.1"/>
    <property type="match status" value="1"/>
</dbReference>
<dbReference type="PANTHER" id="PTHR34772">
    <property type="entry name" value="RNA-BINDING PROTEIN HFQ"/>
    <property type="match status" value="1"/>
</dbReference>
<dbReference type="PANTHER" id="PTHR34772:SF1">
    <property type="entry name" value="RNA-BINDING PROTEIN HFQ"/>
    <property type="match status" value="1"/>
</dbReference>
<dbReference type="Pfam" id="PF17209">
    <property type="entry name" value="Hfq"/>
    <property type="match status" value="1"/>
</dbReference>
<dbReference type="SUPFAM" id="SSF50182">
    <property type="entry name" value="Sm-like ribonucleoproteins"/>
    <property type="match status" value="1"/>
</dbReference>
<dbReference type="PROSITE" id="PS52002">
    <property type="entry name" value="SM"/>
    <property type="match status" value="1"/>
</dbReference>
<comment type="function">
    <text evidence="1">RNA chaperone that binds small regulatory RNA (sRNAs) and mRNAs to facilitate mRNA translational regulation in response to envelope stress, environmental stress and changes in metabolite concentrations. Also binds with high specificity to tRNAs.</text>
</comment>
<comment type="subunit">
    <text evidence="1">Homohexamer.</text>
</comment>
<comment type="similarity">
    <text evidence="1">Belongs to the Hfq family.</text>
</comment>
<proteinExistence type="inferred from homology"/>
<gene>
    <name evidence="1" type="primary">hfq</name>
    <name type="ordered locus">Daud_0557</name>
</gene>